<keyword id="KW-0028">Amino-acid biosynthesis</keyword>
<keyword id="KW-0963">Cytoplasm</keyword>
<keyword id="KW-0521">NADP</keyword>
<keyword id="KW-0560">Oxidoreductase</keyword>
<keyword id="KW-0641">Proline biosynthesis</keyword>
<proteinExistence type="inferred from homology"/>
<name>PROA_ECODH</name>
<organism>
    <name type="scientific">Escherichia coli (strain K12 / DH10B)</name>
    <dbReference type="NCBI Taxonomy" id="316385"/>
    <lineage>
        <taxon>Bacteria</taxon>
        <taxon>Pseudomonadati</taxon>
        <taxon>Pseudomonadota</taxon>
        <taxon>Gammaproteobacteria</taxon>
        <taxon>Enterobacterales</taxon>
        <taxon>Enterobacteriaceae</taxon>
        <taxon>Escherichia</taxon>
    </lineage>
</organism>
<gene>
    <name evidence="1" type="primary">proA</name>
    <name type="ordered locus">ECDH10B_0225</name>
</gene>
<reference key="1">
    <citation type="journal article" date="2008" name="J. Bacteriol.">
        <title>The complete genome sequence of Escherichia coli DH10B: insights into the biology of a laboratory workhorse.</title>
        <authorList>
            <person name="Durfee T."/>
            <person name="Nelson R."/>
            <person name="Baldwin S."/>
            <person name="Plunkett G. III"/>
            <person name="Burland V."/>
            <person name="Mau B."/>
            <person name="Petrosino J.F."/>
            <person name="Qin X."/>
            <person name="Muzny D.M."/>
            <person name="Ayele M."/>
            <person name="Gibbs R.A."/>
            <person name="Csorgo B."/>
            <person name="Posfai G."/>
            <person name="Weinstock G.M."/>
            <person name="Blattner F.R."/>
        </authorList>
    </citation>
    <scope>NUCLEOTIDE SEQUENCE [LARGE SCALE GENOMIC DNA]</scope>
    <source>
        <strain>K12 / DH10B</strain>
    </source>
</reference>
<accession>B1XDY6</accession>
<dbReference type="EC" id="1.2.1.41" evidence="1"/>
<dbReference type="EMBL" id="CP000948">
    <property type="protein sequence ID" value="ACB01410.1"/>
    <property type="molecule type" value="Genomic_DNA"/>
</dbReference>
<dbReference type="RefSeq" id="WP_000893278.1">
    <property type="nucleotide sequence ID" value="NC_010473.1"/>
</dbReference>
<dbReference type="SMR" id="B1XDY6"/>
<dbReference type="GeneID" id="93777150"/>
<dbReference type="KEGG" id="ecd:ECDH10B_0225"/>
<dbReference type="HOGENOM" id="CLU_030231_0_0_6"/>
<dbReference type="UniPathway" id="UPA00098">
    <property type="reaction ID" value="UER00360"/>
</dbReference>
<dbReference type="GO" id="GO:0005737">
    <property type="term" value="C:cytoplasm"/>
    <property type="evidence" value="ECO:0007669"/>
    <property type="project" value="UniProtKB-SubCell"/>
</dbReference>
<dbReference type="GO" id="GO:0004350">
    <property type="term" value="F:glutamate-5-semialdehyde dehydrogenase activity"/>
    <property type="evidence" value="ECO:0007669"/>
    <property type="project" value="UniProtKB-UniRule"/>
</dbReference>
<dbReference type="GO" id="GO:0050661">
    <property type="term" value="F:NADP binding"/>
    <property type="evidence" value="ECO:0007669"/>
    <property type="project" value="InterPro"/>
</dbReference>
<dbReference type="GO" id="GO:0055129">
    <property type="term" value="P:L-proline biosynthetic process"/>
    <property type="evidence" value="ECO:0007669"/>
    <property type="project" value="UniProtKB-UniRule"/>
</dbReference>
<dbReference type="CDD" id="cd07079">
    <property type="entry name" value="ALDH_F18-19_ProA-GPR"/>
    <property type="match status" value="1"/>
</dbReference>
<dbReference type="FunFam" id="3.40.309.10:FF:000006">
    <property type="entry name" value="Gamma-glutamyl phosphate reductase"/>
    <property type="match status" value="1"/>
</dbReference>
<dbReference type="Gene3D" id="3.40.605.10">
    <property type="entry name" value="Aldehyde Dehydrogenase, Chain A, domain 1"/>
    <property type="match status" value="1"/>
</dbReference>
<dbReference type="Gene3D" id="3.40.309.10">
    <property type="entry name" value="Aldehyde Dehydrogenase, Chain A, domain 2"/>
    <property type="match status" value="1"/>
</dbReference>
<dbReference type="HAMAP" id="MF_00412">
    <property type="entry name" value="ProA"/>
    <property type="match status" value="1"/>
</dbReference>
<dbReference type="InterPro" id="IPR016161">
    <property type="entry name" value="Ald_DH/histidinol_DH"/>
</dbReference>
<dbReference type="InterPro" id="IPR016163">
    <property type="entry name" value="Ald_DH_C"/>
</dbReference>
<dbReference type="InterPro" id="IPR016162">
    <property type="entry name" value="Ald_DH_N"/>
</dbReference>
<dbReference type="InterPro" id="IPR015590">
    <property type="entry name" value="Aldehyde_DH_dom"/>
</dbReference>
<dbReference type="InterPro" id="IPR020593">
    <property type="entry name" value="G-glutamylP_reductase_CS"/>
</dbReference>
<dbReference type="InterPro" id="IPR012134">
    <property type="entry name" value="Glu-5-SA_DH"/>
</dbReference>
<dbReference type="InterPro" id="IPR000965">
    <property type="entry name" value="GPR_dom"/>
</dbReference>
<dbReference type="NCBIfam" id="NF001221">
    <property type="entry name" value="PRK00197.1"/>
    <property type="match status" value="1"/>
</dbReference>
<dbReference type="NCBIfam" id="TIGR00407">
    <property type="entry name" value="proA"/>
    <property type="match status" value="1"/>
</dbReference>
<dbReference type="PANTHER" id="PTHR11063:SF8">
    <property type="entry name" value="DELTA-1-PYRROLINE-5-CARBOXYLATE SYNTHASE"/>
    <property type="match status" value="1"/>
</dbReference>
<dbReference type="PANTHER" id="PTHR11063">
    <property type="entry name" value="GLUTAMATE SEMIALDEHYDE DEHYDROGENASE"/>
    <property type="match status" value="1"/>
</dbReference>
<dbReference type="Pfam" id="PF00171">
    <property type="entry name" value="Aldedh"/>
    <property type="match status" value="1"/>
</dbReference>
<dbReference type="PIRSF" id="PIRSF000151">
    <property type="entry name" value="GPR"/>
    <property type="match status" value="1"/>
</dbReference>
<dbReference type="SUPFAM" id="SSF53720">
    <property type="entry name" value="ALDH-like"/>
    <property type="match status" value="1"/>
</dbReference>
<dbReference type="PROSITE" id="PS01223">
    <property type="entry name" value="PROA"/>
    <property type="match status" value="1"/>
</dbReference>
<protein>
    <recommendedName>
        <fullName evidence="1">Gamma-glutamyl phosphate reductase</fullName>
        <shortName evidence="1">GPR</shortName>
        <ecNumber evidence="1">1.2.1.41</ecNumber>
    </recommendedName>
    <alternativeName>
        <fullName evidence="1">Glutamate-5-semialdehyde dehydrogenase</fullName>
    </alternativeName>
    <alternativeName>
        <fullName evidence="1">Glutamyl-gamma-semialdehyde dehydrogenase</fullName>
        <shortName evidence="1">GSA dehydrogenase</shortName>
    </alternativeName>
</protein>
<comment type="function">
    <text evidence="1">Catalyzes the NADPH-dependent reduction of L-glutamate 5-phosphate into L-glutamate 5-semialdehyde and phosphate. The product spontaneously undergoes cyclization to form 1-pyrroline-5-carboxylate.</text>
</comment>
<comment type="catalytic activity">
    <reaction evidence="1">
        <text>L-glutamate 5-semialdehyde + phosphate + NADP(+) = L-glutamyl 5-phosphate + NADPH + H(+)</text>
        <dbReference type="Rhea" id="RHEA:19541"/>
        <dbReference type="ChEBI" id="CHEBI:15378"/>
        <dbReference type="ChEBI" id="CHEBI:43474"/>
        <dbReference type="ChEBI" id="CHEBI:57783"/>
        <dbReference type="ChEBI" id="CHEBI:58066"/>
        <dbReference type="ChEBI" id="CHEBI:58274"/>
        <dbReference type="ChEBI" id="CHEBI:58349"/>
        <dbReference type="EC" id="1.2.1.41"/>
    </reaction>
</comment>
<comment type="pathway">
    <text evidence="1">Amino-acid biosynthesis; L-proline biosynthesis; L-glutamate 5-semialdehyde from L-glutamate: step 2/2.</text>
</comment>
<comment type="subcellular location">
    <subcellularLocation>
        <location evidence="1">Cytoplasm</location>
    </subcellularLocation>
</comment>
<comment type="similarity">
    <text evidence="1">Belongs to the gamma-glutamyl phosphate reductase family.</text>
</comment>
<feature type="chain" id="PRO_1000193603" description="Gamma-glutamyl phosphate reductase">
    <location>
        <begin position="1"/>
        <end position="417"/>
    </location>
</feature>
<evidence type="ECO:0000255" key="1">
    <source>
        <dbReference type="HAMAP-Rule" id="MF_00412"/>
    </source>
</evidence>
<sequence>MLEQMGIAAKQASYKLAQLSSREKNRVLEKIADELEAQSEIILNANAQDVADARANGLSEAMLDRLALTPARLKGIADDVRQVCNLADPVGQVIDGGVLDSGLRLERRRVPLGVIGVIYEARPNVTVDVASLCLKTGNAVILRGGKETCRTNAATVAVIQDALKSCGLPAGAVQAIDNPDRALVSEMLRMDKYIDMLIPRGGAGLHKLCREQSTIPVITGGIGVCHIYVDESVEIAEALKVIVNAKTQRPSTCNTVETLLVNKNIADSFLPALSKQMAESGVTLHADAAALAQLQAGPAKVVAVKAEEYDDEFLSLDLNVKIVSDLDDAIAHIREHGTQHSDAILTRDMRNAQRFVNEVDSSAVYVNASTRFTDGGQFGLGAEVAVSTQKLHARGPMGLEALTTYKWIGIGDYTIRA</sequence>